<feature type="chain" id="PRO_0000287215" description="Glutathione gamma-glutamylcysteinyltransferase 3">
    <location>
        <begin position="1"/>
        <end position="479"/>
    </location>
</feature>
<feature type="domain" description="Peptidase C83" evidence="2">
    <location>
        <begin position="1"/>
        <end position="221"/>
    </location>
</feature>
<feature type="active site" evidence="2">
    <location>
        <position position="56"/>
    </location>
</feature>
<feature type="active site" evidence="2">
    <location>
        <position position="162"/>
    </location>
</feature>
<feature type="active site" evidence="2">
    <location>
        <position position="180"/>
    </location>
</feature>
<proteinExistence type="evidence at transcript level"/>
<protein>
    <recommendedName>
        <fullName>Glutathione gamma-glutamylcysteinyltransferase 3</fullName>
        <ecNumber>2.3.2.15</ecNumber>
    </recommendedName>
    <alternativeName>
        <fullName>LjPCS3-7N</fullName>
    </alternativeName>
    <alternativeName>
        <fullName>Phytochelatin synthase 3</fullName>
    </alternativeName>
</protein>
<sequence length="479" mass="53187">MASAGLYRRVLPSPPAIDFASPEGKKIFVEALGQGTMEGFFKLVSYYQTQSEPAYCGLATLTVVLNALSIDPGRKWKGPWRWFDDSMLDCCEPLEKIKVQGITFGKVACLARCNGAHVEAFRSNESTVSDFRDRVISCCSSEDRHLIVSYHRSGLKQTGEGHFSPIGGYHAERDMVLILDVTRYKYPPHWVPLTLLWDAMNTIDRATGLQRGYMIISKLKRAPSILYTVSCRHEGWSSVAKFLTENVPLLLKSEDLKDIQEVLSVVFKSPPSELREFITWIAEVRRQEDGNLTLSEEEKGRLAIKADILEQIRTTTLFKHVTSWLDSQRSRCRTIAKLQDRDMLPELAAGVCCQGACLLTGCCLPGGKCCSQIDVKHLNVDHKNIVTLVSGTVASGSSSEQGVDVLVPLCQMGPEGHCIGMHPSTADVLTVLLLALPLHTWSGIKEEKLCAEVTSLLTTENLPPLLQEEVRFSLETVLF</sequence>
<dbReference type="EC" id="2.3.2.15"/>
<dbReference type="EMBL" id="DQ013041">
    <property type="protein sequence ID" value="AAY81941.1"/>
    <property type="molecule type" value="mRNA"/>
</dbReference>
<dbReference type="EMBL" id="DQ013040">
    <property type="protein sequence ID" value="AAY81940.1"/>
    <property type="molecule type" value="Genomic_DNA"/>
</dbReference>
<dbReference type="SMR" id="Q2QKL5"/>
<dbReference type="BRENDA" id="2.3.2.15">
    <property type="organism ID" value="3076"/>
</dbReference>
<dbReference type="GO" id="GO:0016756">
    <property type="term" value="F:glutathione gamma-glutamylcysteinyltransferase activity"/>
    <property type="evidence" value="ECO:0007669"/>
    <property type="project" value="UniProtKB-EC"/>
</dbReference>
<dbReference type="GO" id="GO:0046872">
    <property type="term" value="F:metal ion binding"/>
    <property type="evidence" value="ECO:0007669"/>
    <property type="project" value="UniProtKB-KW"/>
</dbReference>
<dbReference type="GO" id="GO:0098849">
    <property type="term" value="P:cellular detoxification of cadmium ion"/>
    <property type="evidence" value="ECO:0007669"/>
    <property type="project" value="TreeGrafter"/>
</dbReference>
<dbReference type="GO" id="GO:0010273">
    <property type="term" value="P:detoxification of copper ion"/>
    <property type="evidence" value="ECO:0007669"/>
    <property type="project" value="TreeGrafter"/>
</dbReference>
<dbReference type="GO" id="GO:0046938">
    <property type="term" value="P:phytochelatin biosynthetic process"/>
    <property type="evidence" value="ECO:0007669"/>
    <property type="project" value="InterPro"/>
</dbReference>
<dbReference type="FunFam" id="3.90.70.30:FF:000001">
    <property type="entry name" value="Glutathione gamma-glutamylcysteinyltransferase 1"/>
    <property type="match status" value="1"/>
</dbReference>
<dbReference type="Gene3D" id="3.90.70.30">
    <property type="entry name" value="Phytochelatin synthase, N-terminal domain"/>
    <property type="match status" value="1"/>
</dbReference>
<dbReference type="InterPro" id="IPR038765">
    <property type="entry name" value="Papain-like_cys_pep_sf"/>
</dbReference>
<dbReference type="InterPro" id="IPR040409">
    <property type="entry name" value="PCS-like"/>
</dbReference>
<dbReference type="InterPro" id="IPR007719">
    <property type="entry name" value="PCS_N"/>
</dbReference>
<dbReference type="InterPro" id="IPR038156">
    <property type="entry name" value="PCS_N_sf"/>
</dbReference>
<dbReference type="InterPro" id="IPR015407">
    <property type="entry name" value="Phytochelatin_synthase_C"/>
</dbReference>
<dbReference type="PANTHER" id="PTHR33447">
    <property type="entry name" value="GLUTATHIONE GAMMA-GLUTAMYLCYSTEINYLTRANSFERASE"/>
    <property type="match status" value="1"/>
</dbReference>
<dbReference type="PANTHER" id="PTHR33447:SF19">
    <property type="entry name" value="GLUTATHIONE GAMMA-GLUTAMYLCYSTEINYLTRANSFERASE"/>
    <property type="match status" value="1"/>
</dbReference>
<dbReference type="Pfam" id="PF05023">
    <property type="entry name" value="Phytochelatin"/>
    <property type="match status" value="1"/>
</dbReference>
<dbReference type="Pfam" id="PF09328">
    <property type="entry name" value="Phytochelatin_C"/>
    <property type="match status" value="1"/>
</dbReference>
<dbReference type="SUPFAM" id="SSF54001">
    <property type="entry name" value="Cysteine proteinases"/>
    <property type="match status" value="1"/>
</dbReference>
<dbReference type="PROSITE" id="PS51443">
    <property type="entry name" value="PCS"/>
    <property type="match status" value="1"/>
</dbReference>
<name>PCS3_LOTJA</name>
<evidence type="ECO:0000250" key="1"/>
<evidence type="ECO:0000255" key="2">
    <source>
        <dbReference type="PROSITE-ProRule" id="PRU00773"/>
    </source>
</evidence>
<evidence type="ECO:0000269" key="3">
    <source>
    </source>
</evidence>
<organism>
    <name type="scientific">Lotus japonicus</name>
    <name type="common">Lotus corniculatus var. japonicus</name>
    <dbReference type="NCBI Taxonomy" id="34305"/>
    <lineage>
        <taxon>Eukaryota</taxon>
        <taxon>Viridiplantae</taxon>
        <taxon>Streptophyta</taxon>
        <taxon>Embryophyta</taxon>
        <taxon>Tracheophyta</taxon>
        <taxon>Spermatophyta</taxon>
        <taxon>Magnoliopsida</taxon>
        <taxon>eudicotyledons</taxon>
        <taxon>Gunneridae</taxon>
        <taxon>Pentapetalae</taxon>
        <taxon>rosids</taxon>
        <taxon>fabids</taxon>
        <taxon>Fabales</taxon>
        <taxon>Fabaceae</taxon>
        <taxon>Papilionoideae</taxon>
        <taxon>50 kb inversion clade</taxon>
        <taxon>NPAAA clade</taxon>
        <taxon>Hologalegina</taxon>
        <taxon>robinioid clade</taxon>
        <taxon>Loteae</taxon>
        <taxon>Lotus</taxon>
    </lineage>
</organism>
<gene>
    <name type="primary">PCS3</name>
</gene>
<keyword id="KW-0012">Acyltransferase</keyword>
<keyword id="KW-0104">Cadmium</keyword>
<keyword id="KW-0479">Metal-binding</keyword>
<keyword id="KW-0808">Transferase</keyword>
<comment type="function">
    <text evidence="3">Involved in the synthesis of phytochelatins (PC) and homophytochelatins (hPC), the heavy-metal-binding peptides of plants.</text>
</comment>
<comment type="catalytic activity">
    <reaction evidence="2">
        <text>[Glu(-Cys)](n)-Gly + glutathione + H(+) = [Glu(-Cys)](n+1)-Gly + glycine</text>
        <dbReference type="Rhea" id="RHEA:17917"/>
        <dbReference type="Rhea" id="RHEA-COMP:12438"/>
        <dbReference type="Rhea" id="RHEA-COMP:12439"/>
        <dbReference type="ChEBI" id="CHEBI:15378"/>
        <dbReference type="ChEBI" id="CHEBI:57305"/>
        <dbReference type="ChEBI" id="CHEBI:57925"/>
        <dbReference type="ChEBI" id="CHEBI:131728"/>
        <dbReference type="EC" id="2.3.2.15"/>
    </reaction>
</comment>
<comment type="activity regulation">
    <text evidence="1">Requires cadmium for activity.</text>
</comment>
<comment type="tissue specificity">
    <text evidence="3">Expressed in roots, nodules and leaves.</text>
</comment>
<comment type="induction">
    <text evidence="3">By cadmium.</text>
</comment>
<comment type="similarity">
    <text evidence="2">Belongs to the phytochelatin synthase family.</text>
</comment>
<accession>Q2QKL5</accession>
<reference key="1">
    <citation type="submission" date="2004-05" db="EMBL/GenBank/DDBJ databases">
        <title>Lotus japonicus phytochelatin synthase mRNA (pcs2).</title>
        <authorList>
            <person name="Naya L."/>
            <person name="Ramos J."/>
            <person name="Becana M."/>
        </authorList>
    </citation>
    <scope>NUCLEOTIDE SEQUENCE [MRNA]</scope>
    <source>
        <tissue>Root</tissue>
    </source>
</reference>
<reference key="2">
    <citation type="journal article" date="2007" name="Plant Physiol.">
        <title>Phytochelatin synthases of the model legume Lotus japonicus. A small multigene family with differential response to cadmium and alternatively spliced variants.</title>
        <authorList>
            <person name="Ramos J."/>
            <person name="Clemente M.R."/>
            <person name="Naya L."/>
            <person name="Loscos J."/>
            <person name="Perez-Rontome C."/>
            <person name="Sato S."/>
            <person name="Tabata S."/>
            <person name="Becana M."/>
        </authorList>
    </citation>
    <scope>NUCLEOTIDE SEQUENCE [GENOMIC DNA]</scope>
    <scope>FUNCTION</scope>
    <scope>TISSUE SPECIFICITY</scope>
    <scope>INDUCTION</scope>
    <source>
        <strain>cv. Miyakojima MG-20</strain>
    </source>
</reference>